<reference key="1">
    <citation type="journal article" date="2008" name="DNA Res.">
        <title>The whole-genome sequencing of the obligate intracellular bacterium Orientia tsutsugamushi revealed massive gene amplification during reductive genome evolution.</title>
        <authorList>
            <person name="Nakayama K."/>
            <person name="Yamashita A."/>
            <person name="Kurokawa K."/>
            <person name="Morimoto T."/>
            <person name="Ogawa M."/>
            <person name="Fukuhara M."/>
            <person name="Urakami H."/>
            <person name="Ohnishi M."/>
            <person name="Uchiyama I."/>
            <person name="Ogura Y."/>
            <person name="Ooka T."/>
            <person name="Oshima K."/>
            <person name="Tamura A."/>
            <person name="Hattori M."/>
            <person name="Hayashi T."/>
        </authorList>
    </citation>
    <scope>NUCLEOTIDE SEQUENCE [LARGE SCALE GENOMIC DNA]</scope>
    <source>
        <strain>Ikeda</strain>
    </source>
</reference>
<accession>B3CT19</accession>
<feature type="chain" id="PRO_1000140589" description="Small ribosomal subunit protein uS8">
    <location>
        <begin position="1"/>
        <end position="133"/>
    </location>
</feature>
<name>RS8_ORITI</name>
<proteinExistence type="inferred from homology"/>
<dbReference type="EMBL" id="AP008981">
    <property type="protein sequence ID" value="BAG40516.1"/>
    <property type="molecule type" value="Genomic_DNA"/>
</dbReference>
<dbReference type="RefSeq" id="WP_012461619.1">
    <property type="nucleotide sequence ID" value="NC_010793.1"/>
</dbReference>
<dbReference type="SMR" id="B3CT19"/>
<dbReference type="GeneID" id="89459043"/>
<dbReference type="KEGG" id="ott:OTT_1058"/>
<dbReference type="HOGENOM" id="CLU_098428_0_0_5"/>
<dbReference type="OrthoDB" id="9802617at2"/>
<dbReference type="Proteomes" id="UP000001033">
    <property type="component" value="Chromosome"/>
</dbReference>
<dbReference type="GO" id="GO:1990904">
    <property type="term" value="C:ribonucleoprotein complex"/>
    <property type="evidence" value="ECO:0007669"/>
    <property type="project" value="UniProtKB-KW"/>
</dbReference>
<dbReference type="GO" id="GO:0005840">
    <property type="term" value="C:ribosome"/>
    <property type="evidence" value="ECO:0007669"/>
    <property type="project" value="UniProtKB-KW"/>
</dbReference>
<dbReference type="GO" id="GO:0019843">
    <property type="term" value="F:rRNA binding"/>
    <property type="evidence" value="ECO:0007669"/>
    <property type="project" value="UniProtKB-UniRule"/>
</dbReference>
<dbReference type="GO" id="GO:0003735">
    <property type="term" value="F:structural constituent of ribosome"/>
    <property type="evidence" value="ECO:0007669"/>
    <property type="project" value="InterPro"/>
</dbReference>
<dbReference type="GO" id="GO:0006412">
    <property type="term" value="P:translation"/>
    <property type="evidence" value="ECO:0007669"/>
    <property type="project" value="UniProtKB-UniRule"/>
</dbReference>
<dbReference type="FunFam" id="3.30.1370.30:FF:000002">
    <property type="entry name" value="30S ribosomal protein S8"/>
    <property type="match status" value="1"/>
</dbReference>
<dbReference type="FunFam" id="3.30.1490.10:FF:000001">
    <property type="entry name" value="30S ribosomal protein S8"/>
    <property type="match status" value="1"/>
</dbReference>
<dbReference type="Gene3D" id="3.30.1370.30">
    <property type="match status" value="1"/>
</dbReference>
<dbReference type="Gene3D" id="3.30.1490.10">
    <property type="match status" value="1"/>
</dbReference>
<dbReference type="HAMAP" id="MF_01302_B">
    <property type="entry name" value="Ribosomal_uS8_B"/>
    <property type="match status" value="1"/>
</dbReference>
<dbReference type="InterPro" id="IPR000630">
    <property type="entry name" value="Ribosomal_uS8"/>
</dbReference>
<dbReference type="InterPro" id="IPR047863">
    <property type="entry name" value="Ribosomal_uS8_CS"/>
</dbReference>
<dbReference type="InterPro" id="IPR035987">
    <property type="entry name" value="Ribosomal_uS8_sf"/>
</dbReference>
<dbReference type="NCBIfam" id="NF001109">
    <property type="entry name" value="PRK00136.1"/>
    <property type="match status" value="1"/>
</dbReference>
<dbReference type="PANTHER" id="PTHR11758">
    <property type="entry name" value="40S RIBOSOMAL PROTEIN S15A"/>
    <property type="match status" value="1"/>
</dbReference>
<dbReference type="Pfam" id="PF00410">
    <property type="entry name" value="Ribosomal_S8"/>
    <property type="match status" value="1"/>
</dbReference>
<dbReference type="SUPFAM" id="SSF56047">
    <property type="entry name" value="Ribosomal protein S8"/>
    <property type="match status" value="1"/>
</dbReference>
<dbReference type="PROSITE" id="PS00053">
    <property type="entry name" value="RIBOSOMAL_S8"/>
    <property type="match status" value="1"/>
</dbReference>
<comment type="function">
    <text evidence="1">One of the primary rRNA binding proteins, it binds directly to 16S rRNA central domain where it helps coordinate assembly of the platform of the 30S subunit.</text>
</comment>
<comment type="subunit">
    <text evidence="1">Part of the 30S ribosomal subunit. Contacts proteins S5 and S12.</text>
</comment>
<comment type="similarity">
    <text evidence="1">Belongs to the universal ribosomal protein uS8 family.</text>
</comment>
<protein>
    <recommendedName>
        <fullName evidence="1">Small ribosomal subunit protein uS8</fullName>
    </recommendedName>
    <alternativeName>
        <fullName evidence="2">30S ribosomal protein S8</fullName>
    </alternativeName>
</protein>
<organism>
    <name type="scientific">Orientia tsutsugamushi (strain Ikeda)</name>
    <name type="common">Rickettsia tsutsugamushi</name>
    <dbReference type="NCBI Taxonomy" id="334380"/>
    <lineage>
        <taxon>Bacteria</taxon>
        <taxon>Pseudomonadati</taxon>
        <taxon>Pseudomonadota</taxon>
        <taxon>Alphaproteobacteria</taxon>
        <taxon>Rickettsiales</taxon>
        <taxon>Rickettsiaceae</taxon>
        <taxon>Rickettsieae</taxon>
        <taxon>Orientia</taxon>
    </lineage>
</organism>
<sequence length="133" mass="15165">MSMSDTLADMLTRIRNAQRSRLMYVNAPSSRRKEAILDVLVKEGFIHSFLVHEVRNGVKEINIKLKYSPKGESNIKEINRVSTPGKRVYLSIKKLRPYYNNMGIYIISTSKGIMSDREARKLGVGGEVICKVF</sequence>
<keyword id="KW-0687">Ribonucleoprotein</keyword>
<keyword id="KW-0689">Ribosomal protein</keyword>
<keyword id="KW-0694">RNA-binding</keyword>
<keyword id="KW-0699">rRNA-binding</keyword>
<evidence type="ECO:0000255" key="1">
    <source>
        <dbReference type="HAMAP-Rule" id="MF_01302"/>
    </source>
</evidence>
<evidence type="ECO:0000305" key="2"/>
<gene>
    <name evidence="1" type="primary">rpsH</name>
    <name type="ordered locus">OTT_1058</name>
</gene>